<sequence>MRVVFMGSPDFSVPVLEALHAHHEVVCVYCQPPRPAGRGKKDRPTPVQARAEELGLPVRHPKSLRTPEVQADFAALGAEVAVVVAYGLILPQPILDAPDRGCLNIHASLLPRWRGAAPIHRAILAGDDETGICIMQMEAGLDTGPVLMCEKTHIGAEDTVQDLHDRLSGMGARLILGAIEALDDLVPQPQPEEGVTYAEKIAKAEAGIDWSRPAAEIDRQIRGLSPFPGAWTMLGGERVKLLRCRLAEGQGAPGELLEGLVIACGSGAVEITLAQREGKRPMERDEFLRGFALPRGSLATAS</sequence>
<protein>
    <recommendedName>
        <fullName evidence="1">Methionyl-tRNA formyltransferase</fullName>
        <ecNumber evidence="1">2.1.2.9</ecNumber>
    </recommendedName>
</protein>
<organism>
    <name type="scientific">Cereibacter sphaeroides (strain ATCC 17025 / ATH 2.4.3)</name>
    <name type="common">Rhodobacter sphaeroides</name>
    <dbReference type="NCBI Taxonomy" id="349102"/>
    <lineage>
        <taxon>Bacteria</taxon>
        <taxon>Pseudomonadati</taxon>
        <taxon>Pseudomonadota</taxon>
        <taxon>Alphaproteobacteria</taxon>
        <taxon>Rhodobacterales</taxon>
        <taxon>Paracoccaceae</taxon>
        <taxon>Cereibacter</taxon>
    </lineage>
</organism>
<evidence type="ECO:0000255" key="1">
    <source>
        <dbReference type="HAMAP-Rule" id="MF_00182"/>
    </source>
</evidence>
<proteinExistence type="inferred from homology"/>
<reference key="1">
    <citation type="submission" date="2007-04" db="EMBL/GenBank/DDBJ databases">
        <title>Complete sequence of chromosome of Rhodobacter sphaeroides ATCC 17025.</title>
        <authorList>
            <consortium name="US DOE Joint Genome Institute"/>
            <person name="Copeland A."/>
            <person name="Lucas S."/>
            <person name="Lapidus A."/>
            <person name="Barry K."/>
            <person name="Detter J.C."/>
            <person name="Glavina del Rio T."/>
            <person name="Hammon N."/>
            <person name="Israni S."/>
            <person name="Dalin E."/>
            <person name="Tice H."/>
            <person name="Pitluck S."/>
            <person name="Chertkov O."/>
            <person name="Brettin T."/>
            <person name="Bruce D."/>
            <person name="Han C."/>
            <person name="Schmutz J."/>
            <person name="Larimer F."/>
            <person name="Land M."/>
            <person name="Hauser L."/>
            <person name="Kyrpides N."/>
            <person name="Kim E."/>
            <person name="Richardson P."/>
            <person name="Mackenzie C."/>
            <person name="Choudhary M."/>
            <person name="Donohue T.J."/>
            <person name="Kaplan S."/>
        </authorList>
    </citation>
    <scope>NUCLEOTIDE SEQUENCE [LARGE SCALE GENOMIC DNA]</scope>
    <source>
        <strain>ATCC 17025 / ATH 2.4.3</strain>
    </source>
</reference>
<accession>A4WNU8</accession>
<name>FMT_CERS5</name>
<gene>
    <name evidence="1" type="primary">fmt</name>
    <name type="ordered locus">Rsph17025_0151</name>
</gene>
<keyword id="KW-0648">Protein biosynthesis</keyword>
<keyword id="KW-0808">Transferase</keyword>
<dbReference type="EC" id="2.1.2.9" evidence="1"/>
<dbReference type="EMBL" id="CP000661">
    <property type="protein sequence ID" value="ABP69062.1"/>
    <property type="molecule type" value="Genomic_DNA"/>
</dbReference>
<dbReference type="SMR" id="A4WNU8"/>
<dbReference type="STRING" id="349102.Rsph17025_0151"/>
<dbReference type="KEGG" id="rsq:Rsph17025_0151"/>
<dbReference type="eggNOG" id="COG0223">
    <property type="taxonomic scope" value="Bacteria"/>
</dbReference>
<dbReference type="HOGENOM" id="CLU_033347_1_2_5"/>
<dbReference type="BioCyc" id="RSPH349102:G1G8M-152-MONOMER"/>
<dbReference type="GO" id="GO:0005829">
    <property type="term" value="C:cytosol"/>
    <property type="evidence" value="ECO:0007669"/>
    <property type="project" value="TreeGrafter"/>
</dbReference>
<dbReference type="GO" id="GO:0004479">
    <property type="term" value="F:methionyl-tRNA formyltransferase activity"/>
    <property type="evidence" value="ECO:0007669"/>
    <property type="project" value="UniProtKB-UniRule"/>
</dbReference>
<dbReference type="CDD" id="cd08646">
    <property type="entry name" value="FMT_core_Met-tRNA-FMT_N"/>
    <property type="match status" value="1"/>
</dbReference>
<dbReference type="CDD" id="cd08704">
    <property type="entry name" value="Met_tRNA_FMT_C"/>
    <property type="match status" value="1"/>
</dbReference>
<dbReference type="FunFam" id="3.40.50.12230:FF:000001">
    <property type="entry name" value="Methionyl-tRNA formyltransferase"/>
    <property type="match status" value="1"/>
</dbReference>
<dbReference type="Gene3D" id="3.40.50.12230">
    <property type="match status" value="1"/>
</dbReference>
<dbReference type="HAMAP" id="MF_00182">
    <property type="entry name" value="Formyl_trans"/>
    <property type="match status" value="1"/>
</dbReference>
<dbReference type="InterPro" id="IPR005794">
    <property type="entry name" value="Fmt"/>
</dbReference>
<dbReference type="InterPro" id="IPR005793">
    <property type="entry name" value="Formyl_trans_C"/>
</dbReference>
<dbReference type="InterPro" id="IPR002376">
    <property type="entry name" value="Formyl_transf_N"/>
</dbReference>
<dbReference type="InterPro" id="IPR036477">
    <property type="entry name" value="Formyl_transf_N_sf"/>
</dbReference>
<dbReference type="InterPro" id="IPR011034">
    <property type="entry name" value="Formyl_transferase-like_C_sf"/>
</dbReference>
<dbReference type="InterPro" id="IPR001555">
    <property type="entry name" value="GART_AS"/>
</dbReference>
<dbReference type="InterPro" id="IPR044135">
    <property type="entry name" value="Met-tRNA-FMT_C"/>
</dbReference>
<dbReference type="InterPro" id="IPR041711">
    <property type="entry name" value="Met-tRNA-FMT_N"/>
</dbReference>
<dbReference type="NCBIfam" id="TIGR00460">
    <property type="entry name" value="fmt"/>
    <property type="match status" value="1"/>
</dbReference>
<dbReference type="PANTHER" id="PTHR11138">
    <property type="entry name" value="METHIONYL-TRNA FORMYLTRANSFERASE"/>
    <property type="match status" value="1"/>
</dbReference>
<dbReference type="PANTHER" id="PTHR11138:SF5">
    <property type="entry name" value="METHIONYL-TRNA FORMYLTRANSFERASE, MITOCHONDRIAL"/>
    <property type="match status" value="1"/>
</dbReference>
<dbReference type="Pfam" id="PF02911">
    <property type="entry name" value="Formyl_trans_C"/>
    <property type="match status" value="1"/>
</dbReference>
<dbReference type="Pfam" id="PF00551">
    <property type="entry name" value="Formyl_trans_N"/>
    <property type="match status" value="1"/>
</dbReference>
<dbReference type="SUPFAM" id="SSF50486">
    <property type="entry name" value="FMT C-terminal domain-like"/>
    <property type="match status" value="1"/>
</dbReference>
<dbReference type="SUPFAM" id="SSF53328">
    <property type="entry name" value="Formyltransferase"/>
    <property type="match status" value="1"/>
</dbReference>
<dbReference type="PROSITE" id="PS00373">
    <property type="entry name" value="GART"/>
    <property type="match status" value="1"/>
</dbReference>
<feature type="chain" id="PRO_1000020146" description="Methionyl-tRNA formyltransferase">
    <location>
        <begin position="1"/>
        <end position="302"/>
    </location>
</feature>
<feature type="binding site" evidence="1">
    <location>
        <begin position="108"/>
        <end position="111"/>
    </location>
    <ligand>
        <name>(6S)-5,6,7,8-tetrahydrofolate</name>
        <dbReference type="ChEBI" id="CHEBI:57453"/>
    </ligand>
</feature>
<comment type="function">
    <text evidence="1">Attaches a formyl group to the free amino group of methionyl-tRNA(fMet). The formyl group appears to play a dual role in the initiator identity of N-formylmethionyl-tRNA by promoting its recognition by IF2 and preventing the misappropriation of this tRNA by the elongation apparatus.</text>
</comment>
<comment type="catalytic activity">
    <reaction evidence="1">
        <text>L-methionyl-tRNA(fMet) + (6R)-10-formyltetrahydrofolate = N-formyl-L-methionyl-tRNA(fMet) + (6S)-5,6,7,8-tetrahydrofolate + H(+)</text>
        <dbReference type="Rhea" id="RHEA:24380"/>
        <dbReference type="Rhea" id="RHEA-COMP:9952"/>
        <dbReference type="Rhea" id="RHEA-COMP:9953"/>
        <dbReference type="ChEBI" id="CHEBI:15378"/>
        <dbReference type="ChEBI" id="CHEBI:57453"/>
        <dbReference type="ChEBI" id="CHEBI:78530"/>
        <dbReference type="ChEBI" id="CHEBI:78844"/>
        <dbReference type="ChEBI" id="CHEBI:195366"/>
        <dbReference type="EC" id="2.1.2.9"/>
    </reaction>
</comment>
<comment type="similarity">
    <text evidence="1">Belongs to the Fmt family.</text>
</comment>